<organism>
    <name type="scientific">Salmonella typhi</name>
    <dbReference type="NCBI Taxonomy" id="90370"/>
    <lineage>
        <taxon>Bacteria</taxon>
        <taxon>Pseudomonadati</taxon>
        <taxon>Pseudomonadota</taxon>
        <taxon>Gammaproteobacteria</taxon>
        <taxon>Enterobacterales</taxon>
        <taxon>Enterobacteriaceae</taxon>
        <taxon>Salmonella</taxon>
    </lineage>
</organism>
<comment type="function">
    <text evidence="1">An FAD assembly protein, which accelerates covalent attachment of the cofactor into other proteins. Plays an essential role in the assembly of succinate dehydrogenase (SDH, respiratory complex II), an enzyme complex that is a component of both the tricarboxylic acid cycle and the electron transport chain, and which couples the oxidation of succinate to fumarate with the reduction of ubiquinone (coenzyme Q) to ubiquinol. Required for flavinylation (covalent attachment of FAD) of the flavoprotein subunit SdhA of SDH and other flavinylated proteins as well.</text>
</comment>
<comment type="subunit">
    <text evidence="2">Monomer.</text>
</comment>
<comment type="subcellular location">
    <subcellularLocation>
        <location evidence="1">Cytoplasm</location>
    </subcellularLocation>
</comment>
<comment type="similarity">
    <text evidence="3">Belongs to the SdhE FAD assembly factor family.</text>
</comment>
<evidence type="ECO:0000250" key="1">
    <source>
        <dbReference type="UniProtKB" id="G4V4G2"/>
    </source>
</evidence>
<evidence type="ECO:0000250" key="2">
    <source>
        <dbReference type="UniProtKB" id="P64559"/>
    </source>
</evidence>
<evidence type="ECO:0000305" key="3"/>
<proteinExistence type="inferred from homology"/>
<name>SDHE_SALTI</name>
<protein>
    <recommendedName>
        <fullName>FAD assembly factor SdhE</fullName>
    </recommendedName>
</protein>
<feature type="chain" id="PRO_0000214421" description="FAD assembly factor SdhE">
    <location>
        <begin position="1"/>
        <end position="88"/>
    </location>
</feature>
<gene>
    <name type="primary">sdhE</name>
    <name type="synonym">ygfY</name>
    <name type="ordered locus">STY3203</name>
    <name type="ordered locus">t2965</name>
</gene>
<accession>Q8XEN6</accession>
<accession>Q7AMC1</accession>
<sequence>MDIHNKARIHWACRRGMRELDISIMPFFEHEYDSLSDEEKRIFVRLLQSDDPDLFNWLMNHGKPADAELEQMVRLIQTRNRERGPVAI</sequence>
<keyword id="KW-0143">Chaperone</keyword>
<keyword id="KW-0963">Cytoplasm</keyword>
<dbReference type="EMBL" id="AL513382">
    <property type="protein sequence ID" value="CAD02877.1"/>
    <property type="molecule type" value="Genomic_DNA"/>
</dbReference>
<dbReference type="EMBL" id="AE014613">
    <property type="protein sequence ID" value="AAO70517.1"/>
    <property type="molecule type" value="Genomic_DNA"/>
</dbReference>
<dbReference type="RefSeq" id="NP_457445.1">
    <property type="nucleotide sequence ID" value="NC_003198.1"/>
</dbReference>
<dbReference type="RefSeq" id="WP_000351186.1">
    <property type="nucleotide sequence ID" value="NZ_WSUR01000024.1"/>
</dbReference>
<dbReference type="SMR" id="Q8XEN6"/>
<dbReference type="STRING" id="220341.gene:17587078"/>
<dbReference type="GeneID" id="66757346"/>
<dbReference type="KEGG" id="stt:t2965"/>
<dbReference type="KEGG" id="sty:STY3203"/>
<dbReference type="PATRIC" id="fig|220341.7.peg.3261"/>
<dbReference type="eggNOG" id="COG2938">
    <property type="taxonomic scope" value="Bacteria"/>
</dbReference>
<dbReference type="HOGENOM" id="CLU_103054_2_2_6"/>
<dbReference type="OMA" id="FEHEYDT"/>
<dbReference type="OrthoDB" id="9180899at2"/>
<dbReference type="Proteomes" id="UP000000541">
    <property type="component" value="Chromosome"/>
</dbReference>
<dbReference type="Proteomes" id="UP000002670">
    <property type="component" value="Chromosome"/>
</dbReference>
<dbReference type="GO" id="GO:0005737">
    <property type="term" value="C:cytoplasm"/>
    <property type="evidence" value="ECO:0007669"/>
    <property type="project" value="UniProtKB-SubCell"/>
</dbReference>
<dbReference type="GO" id="GO:0006105">
    <property type="term" value="P:succinate metabolic process"/>
    <property type="evidence" value="ECO:0007669"/>
    <property type="project" value="TreeGrafter"/>
</dbReference>
<dbReference type="FunFam" id="1.10.150.250:FF:000001">
    <property type="entry name" value="FAD assembly factor SdhE"/>
    <property type="match status" value="1"/>
</dbReference>
<dbReference type="Gene3D" id="1.10.150.250">
    <property type="entry name" value="Flavinator of succinate dehydrogenase"/>
    <property type="match status" value="1"/>
</dbReference>
<dbReference type="InterPro" id="IPR005631">
    <property type="entry name" value="SDH"/>
</dbReference>
<dbReference type="InterPro" id="IPR036714">
    <property type="entry name" value="SDH_sf"/>
</dbReference>
<dbReference type="InterPro" id="IPR050531">
    <property type="entry name" value="SdhE_FAD_assembly_factor"/>
</dbReference>
<dbReference type="NCBIfam" id="NF008130">
    <property type="entry name" value="PRK10878.1"/>
    <property type="match status" value="1"/>
</dbReference>
<dbReference type="PANTHER" id="PTHR39585">
    <property type="entry name" value="FAD ASSEMBLY FACTOR SDHE"/>
    <property type="match status" value="1"/>
</dbReference>
<dbReference type="PANTHER" id="PTHR39585:SF1">
    <property type="entry name" value="FAD ASSEMBLY FACTOR SDHE"/>
    <property type="match status" value="1"/>
</dbReference>
<dbReference type="Pfam" id="PF03937">
    <property type="entry name" value="Sdh5"/>
    <property type="match status" value="1"/>
</dbReference>
<dbReference type="SUPFAM" id="SSF109910">
    <property type="entry name" value="YgfY-like"/>
    <property type="match status" value="1"/>
</dbReference>
<reference key="1">
    <citation type="journal article" date="2001" name="Nature">
        <title>Complete genome sequence of a multiple drug resistant Salmonella enterica serovar Typhi CT18.</title>
        <authorList>
            <person name="Parkhill J."/>
            <person name="Dougan G."/>
            <person name="James K.D."/>
            <person name="Thomson N.R."/>
            <person name="Pickard D."/>
            <person name="Wain J."/>
            <person name="Churcher C.M."/>
            <person name="Mungall K.L."/>
            <person name="Bentley S.D."/>
            <person name="Holden M.T.G."/>
            <person name="Sebaihia M."/>
            <person name="Baker S."/>
            <person name="Basham D."/>
            <person name="Brooks K."/>
            <person name="Chillingworth T."/>
            <person name="Connerton P."/>
            <person name="Cronin A."/>
            <person name="Davis P."/>
            <person name="Davies R.M."/>
            <person name="Dowd L."/>
            <person name="White N."/>
            <person name="Farrar J."/>
            <person name="Feltwell T."/>
            <person name="Hamlin N."/>
            <person name="Haque A."/>
            <person name="Hien T.T."/>
            <person name="Holroyd S."/>
            <person name="Jagels K."/>
            <person name="Krogh A."/>
            <person name="Larsen T.S."/>
            <person name="Leather S."/>
            <person name="Moule S."/>
            <person name="O'Gaora P."/>
            <person name="Parry C."/>
            <person name="Quail M.A."/>
            <person name="Rutherford K.M."/>
            <person name="Simmonds M."/>
            <person name="Skelton J."/>
            <person name="Stevens K."/>
            <person name="Whitehead S."/>
            <person name="Barrell B.G."/>
        </authorList>
    </citation>
    <scope>NUCLEOTIDE SEQUENCE [LARGE SCALE GENOMIC DNA]</scope>
    <source>
        <strain>CT18</strain>
    </source>
</reference>
<reference key="2">
    <citation type="journal article" date="2003" name="J. Bacteriol.">
        <title>Comparative genomics of Salmonella enterica serovar Typhi strains Ty2 and CT18.</title>
        <authorList>
            <person name="Deng W."/>
            <person name="Liou S.-R."/>
            <person name="Plunkett G. III"/>
            <person name="Mayhew G.F."/>
            <person name="Rose D.J."/>
            <person name="Burland V."/>
            <person name="Kodoyianni V."/>
            <person name="Schwartz D.C."/>
            <person name="Blattner F.R."/>
        </authorList>
    </citation>
    <scope>NUCLEOTIDE SEQUENCE [LARGE SCALE GENOMIC DNA]</scope>
    <source>
        <strain>ATCC 700931 / Ty2</strain>
    </source>
</reference>